<feature type="chain" id="PRO_1000215424" description="tRNA(Met) cytidine acetate ligase">
    <location>
        <begin position="1"/>
        <end position="383"/>
    </location>
</feature>
<feature type="binding site" evidence="1">
    <location>
        <begin position="7"/>
        <end position="20"/>
    </location>
    <ligand>
        <name>ATP</name>
        <dbReference type="ChEBI" id="CHEBI:30616"/>
    </ligand>
</feature>
<feature type="binding site" evidence="1">
    <location>
        <position position="102"/>
    </location>
    <ligand>
        <name>ATP</name>
        <dbReference type="ChEBI" id="CHEBI:30616"/>
    </ligand>
</feature>
<feature type="binding site" evidence="1">
    <location>
        <position position="160"/>
    </location>
    <ligand>
        <name>ATP</name>
        <dbReference type="ChEBI" id="CHEBI:30616"/>
    </ligand>
</feature>
<feature type="binding site" evidence="1">
    <location>
        <begin position="181"/>
        <end position="182"/>
    </location>
    <ligand>
        <name>ATP</name>
        <dbReference type="ChEBI" id="CHEBI:30616"/>
    </ligand>
</feature>
<accession>B1YIU9</accession>
<dbReference type="EC" id="6.3.4.-" evidence="1"/>
<dbReference type="EMBL" id="CP001022">
    <property type="protein sequence ID" value="ACB61425.1"/>
    <property type="molecule type" value="Genomic_DNA"/>
</dbReference>
<dbReference type="RefSeq" id="WP_012370843.1">
    <property type="nucleotide sequence ID" value="NC_010556.1"/>
</dbReference>
<dbReference type="SMR" id="B1YIU9"/>
<dbReference type="STRING" id="262543.Exig_1973"/>
<dbReference type="KEGG" id="esi:Exig_1973"/>
<dbReference type="eggNOG" id="COG1323">
    <property type="taxonomic scope" value="Bacteria"/>
</dbReference>
<dbReference type="HOGENOM" id="CLU_038915_0_2_9"/>
<dbReference type="OrthoDB" id="9769796at2"/>
<dbReference type="Proteomes" id="UP000001681">
    <property type="component" value="Chromosome"/>
</dbReference>
<dbReference type="GO" id="GO:0005737">
    <property type="term" value="C:cytoplasm"/>
    <property type="evidence" value="ECO:0007669"/>
    <property type="project" value="UniProtKB-SubCell"/>
</dbReference>
<dbReference type="GO" id="GO:0005524">
    <property type="term" value="F:ATP binding"/>
    <property type="evidence" value="ECO:0007669"/>
    <property type="project" value="UniProtKB-KW"/>
</dbReference>
<dbReference type="GO" id="GO:0016879">
    <property type="term" value="F:ligase activity, forming carbon-nitrogen bonds"/>
    <property type="evidence" value="ECO:0007669"/>
    <property type="project" value="UniProtKB-UniRule"/>
</dbReference>
<dbReference type="GO" id="GO:0000049">
    <property type="term" value="F:tRNA binding"/>
    <property type="evidence" value="ECO:0007669"/>
    <property type="project" value="UniProtKB-KW"/>
</dbReference>
<dbReference type="GO" id="GO:0006400">
    <property type="term" value="P:tRNA modification"/>
    <property type="evidence" value="ECO:0007669"/>
    <property type="project" value="UniProtKB-UniRule"/>
</dbReference>
<dbReference type="Gene3D" id="3.40.50.620">
    <property type="entry name" value="HUPs"/>
    <property type="match status" value="1"/>
</dbReference>
<dbReference type="HAMAP" id="MF_01539">
    <property type="entry name" value="TmcAL"/>
    <property type="match status" value="1"/>
</dbReference>
<dbReference type="InterPro" id="IPR014729">
    <property type="entry name" value="Rossmann-like_a/b/a_fold"/>
</dbReference>
<dbReference type="InterPro" id="IPR008513">
    <property type="entry name" value="tRNA(Met)_cyd_acetate_ligase"/>
</dbReference>
<dbReference type="PANTHER" id="PTHR37825">
    <property type="entry name" value="TRNA(MET) CYTIDINE ACETATE LIGASE"/>
    <property type="match status" value="1"/>
</dbReference>
<dbReference type="PANTHER" id="PTHR37825:SF1">
    <property type="entry name" value="TRNA(MET) CYTIDINE ACETATE LIGASE"/>
    <property type="match status" value="1"/>
</dbReference>
<dbReference type="Pfam" id="PF05636">
    <property type="entry name" value="HIGH_NTase1"/>
    <property type="match status" value="1"/>
</dbReference>
<dbReference type="SUPFAM" id="SSF52374">
    <property type="entry name" value="Nucleotidylyl transferase"/>
    <property type="match status" value="1"/>
</dbReference>
<sequence length="383" mass="42920">MRMTAIISEYNPFHNGHLYQAKIARQETGADLIVAIMSGTFTQRGEPAFTDKWTRAQAAVASGEIDLVLELPFYFAVQRADRFALGGVTIAETIGAESLSFGSECGQLEPFIEAAAENQEATPRYQELMQEGLARGLSSATAASHAFREMTTTLDLTTPNNTLGYYYARAASTITLHTTKRIGSGYHDLSTGDIMSATAIRAYHATHHSLIGLPELTAETLRNAVFASFEPYYPFIRHRLLTTPLDDLMQFNGIDSSLAPRLIEGARKNETFDNFMTAVKTRRYTRTSLQRVLIYLLTSSKSSEFENIAFDRIDYVRPLAFNDNGRLALREIKQRIPVISTFEKHPWLIKESHVTAAYAVPLARYDRLEEHRRFAHFAGSVSK</sequence>
<reference key="1">
    <citation type="submission" date="2008-04" db="EMBL/GenBank/DDBJ databases">
        <title>Complete sequence of chromosome of Exiguobacterium sibiricum 255-15.</title>
        <authorList>
            <consortium name="US DOE Joint Genome Institute"/>
            <person name="Copeland A."/>
            <person name="Lucas S."/>
            <person name="Lapidus A."/>
            <person name="Glavina del Rio T."/>
            <person name="Dalin E."/>
            <person name="Tice H."/>
            <person name="Bruce D."/>
            <person name="Goodwin L."/>
            <person name="Pitluck S."/>
            <person name="Kiss H."/>
            <person name="Chertkov O."/>
            <person name="Monk C."/>
            <person name="Brettin T."/>
            <person name="Detter J.C."/>
            <person name="Han C."/>
            <person name="Kuske C.R."/>
            <person name="Schmutz J."/>
            <person name="Larimer F."/>
            <person name="Land M."/>
            <person name="Hauser L."/>
            <person name="Kyrpides N."/>
            <person name="Mikhailova N."/>
            <person name="Vishnivetskaya T."/>
            <person name="Rodrigues D.F."/>
            <person name="Gilichinsky D."/>
            <person name="Tiedje J."/>
            <person name="Richardson P."/>
        </authorList>
    </citation>
    <scope>NUCLEOTIDE SEQUENCE [LARGE SCALE GENOMIC DNA]</scope>
    <source>
        <strain>DSM 17290 / CCUG 55495 / CIP 109462 / JCM 13490 / 255-15</strain>
    </source>
</reference>
<keyword id="KW-0067">ATP-binding</keyword>
<keyword id="KW-0963">Cytoplasm</keyword>
<keyword id="KW-0436">Ligase</keyword>
<keyword id="KW-0547">Nucleotide-binding</keyword>
<keyword id="KW-1185">Reference proteome</keyword>
<keyword id="KW-0694">RNA-binding</keyword>
<keyword id="KW-0819">tRNA processing</keyword>
<keyword id="KW-0820">tRNA-binding</keyword>
<gene>
    <name evidence="1" type="primary">tmcAL</name>
    <name type="ordered locus">Exig_1973</name>
</gene>
<protein>
    <recommendedName>
        <fullName evidence="1">tRNA(Met) cytidine acetate ligase</fullName>
        <ecNumber evidence="1">6.3.4.-</ecNumber>
    </recommendedName>
</protein>
<proteinExistence type="inferred from homology"/>
<name>TMCAL_EXIS2</name>
<organism>
    <name type="scientific">Exiguobacterium sibiricum (strain DSM 17290 / CCUG 55495 / CIP 109462 / JCM 13490 / 255-15)</name>
    <dbReference type="NCBI Taxonomy" id="262543"/>
    <lineage>
        <taxon>Bacteria</taxon>
        <taxon>Bacillati</taxon>
        <taxon>Bacillota</taxon>
        <taxon>Bacilli</taxon>
        <taxon>Bacillales</taxon>
        <taxon>Bacillales Family XII. Incertae Sedis</taxon>
        <taxon>Exiguobacterium</taxon>
    </lineage>
</organism>
<evidence type="ECO:0000255" key="1">
    <source>
        <dbReference type="HAMAP-Rule" id="MF_01539"/>
    </source>
</evidence>
<comment type="function">
    <text evidence="1">Catalyzes the formation of N(4)-acetylcytidine (ac(4)C) at the wobble position of elongator tRNA(Met), using acetate and ATP as substrates. First activates an acetate ion to form acetyladenylate (Ac-AMP) and then transfers the acetyl group to tRNA to form ac(4)C34.</text>
</comment>
<comment type="catalytic activity">
    <reaction evidence="1">
        <text>cytidine(34) in elongator tRNA(Met) + acetate + ATP = N(4)-acetylcytidine(34) in elongator tRNA(Met) + AMP + diphosphate</text>
        <dbReference type="Rhea" id="RHEA:58144"/>
        <dbReference type="Rhea" id="RHEA-COMP:10693"/>
        <dbReference type="Rhea" id="RHEA-COMP:10694"/>
        <dbReference type="ChEBI" id="CHEBI:30089"/>
        <dbReference type="ChEBI" id="CHEBI:30616"/>
        <dbReference type="ChEBI" id="CHEBI:33019"/>
        <dbReference type="ChEBI" id="CHEBI:74900"/>
        <dbReference type="ChEBI" id="CHEBI:82748"/>
        <dbReference type="ChEBI" id="CHEBI:456215"/>
    </reaction>
</comment>
<comment type="subcellular location">
    <subcellularLocation>
        <location evidence="1">Cytoplasm</location>
    </subcellularLocation>
</comment>
<comment type="similarity">
    <text evidence="1">Belongs to the TmcAL family.</text>
</comment>